<gene>
    <name evidence="1" type="primary">kdkA</name>
    <name type="ordered locus">VV1_0814</name>
</gene>
<proteinExistence type="inferred from homology"/>
<accession>Q8DDZ1</accession>
<feature type="chain" id="PRO_0000194318" description="3-deoxy-D-manno-octulosonic acid kinase">
    <location>
        <begin position="1"/>
        <end position="236"/>
    </location>
</feature>
<feature type="active site" evidence="1">
    <location>
        <position position="167"/>
    </location>
</feature>
<sequence>MIEQQQFGQSRICYDSEWVSSPELALFDPQYWQAQNKVVGSATGRGTTWFVQLPKITAALRHYRRGGLFGKLVKDHYWFQSWSATRSFAEFHLLKQLREAGVNVPRPIAAYAMRKGLFYQADLLSERIANAQDLVTILQKHSLSAELYQKIGVEIAKMHRVGVNHTDLNIHNILIDAQETIWIIDFDKCYPQAGDGWKQENLDRLKRSFNKERVKRSIHWHDKDFHALLTGYESQQ</sequence>
<evidence type="ECO:0000255" key="1">
    <source>
        <dbReference type="HAMAP-Rule" id="MF_00521"/>
    </source>
</evidence>
<comment type="function">
    <text evidence="1">Catalyzes the ATP-dependent phosphorylation of the 3-deoxy-D-manno-octulosonic acid (Kdo) residue in Kdo-lipid IV(A) at the 4-OH position.</text>
</comment>
<comment type="catalytic activity">
    <reaction evidence="1">
        <text>an alpha-Kdo-(2-&gt;6)-lipid IVA + ATP = a 4-O-phospho-alpha-Kdo-(2-&gt;6)-lipid IVA + ADP + H(+)</text>
        <dbReference type="Rhea" id="RHEA:74271"/>
        <dbReference type="ChEBI" id="CHEBI:15378"/>
        <dbReference type="ChEBI" id="CHEBI:30616"/>
        <dbReference type="ChEBI" id="CHEBI:176428"/>
        <dbReference type="ChEBI" id="CHEBI:193140"/>
        <dbReference type="ChEBI" id="CHEBI:456216"/>
        <dbReference type="EC" id="2.7.1.166"/>
    </reaction>
</comment>
<comment type="pathway">
    <text evidence="1">Bacterial outer membrane biogenesis; LPS core biosynthesis.</text>
</comment>
<comment type="subcellular location">
    <subcellularLocation>
        <location evidence="1">Cell inner membrane</location>
        <topology evidence="1">Peripheral membrane protein</topology>
        <orientation evidence="1">Cytoplasmic side</orientation>
    </subcellularLocation>
</comment>
<comment type="similarity">
    <text evidence="1">Belongs to the protein kinase superfamily. KdkA/RfaP family.</text>
</comment>
<name>KDKA_VIBVU</name>
<keyword id="KW-0067">ATP-binding</keyword>
<keyword id="KW-0997">Cell inner membrane</keyword>
<keyword id="KW-1003">Cell membrane</keyword>
<keyword id="KW-0418">Kinase</keyword>
<keyword id="KW-0448">Lipopolysaccharide biosynthesis</keyword>
<keyword id="KW-0472">Membrane</keyword>
<keyword id="KW-0547">Nucleotide-binding</keyword>
<keyword id="KW-0808">Transferase</keyword>
<protein>
    <recommendedName>
        <fullName evidence="1">3-deoxy-D-manno-octulosonic acid kinase</fullName>
        <shortName evidence="1">Kdo kinase</shortName>
        <ecNumber evidence="1">2.7.1.166</ecNumber>
    </recommendedName>
</protein>
<organism>
    <name type="scientific">Vibrio vulnificus (strain CMCP6)</name>
    <dbReference type="NCBI Taxonomy" id="216895"/>
    <lineage>
        <taxon>Bacteria</taxon>
        <taxon>Pseudomonadati</taxon>
        <taxon>Pseudomonadota</taxon>
        <taxon>Gammaproteobacteria</taxon>
        <taxon>Vibrionales</taxon>
        <taxon>Vibrionaceae</taxon>
        <taxon>Vibrio</taxon>
    </lineage>
</organism>
<dbReference type="EC" id="2.7.1.166" evidence="1"/>
<dbReference type="EMBL" id="AE016795">
    <property type="protein sequence ID" value="AAO09318.1"/>
    <property type="molecule type" value="Genomic_DNA"/>
</dbReference>
<dbReference type="RefSeq" id="WP_011078884.1">
    <property type="nucleotide sequence ID" value="NC_004459.3"/>
</dbReference>
<dbReference type="SMR" id="Q8DDZ1"/>
<dbReference type="KEGG" id="vvu:VV1_0814"/>
<dbReference type="HOGENOM" id="CLU_094226_0_0_6"/>
<dbReference type="UniPathway" id="UPA00958"/>
<dbReference type="Proteomes" id="UP000002275">
    <property type="component" value="Chromosome 1"/>
</dbReference>
<dbReference type="GO" id="GO:0005886">
    <property type="term" value="C:plasma membrane"/>
    <property type="evidence" value="ECO:0007669"/>
    <property type="project" value="UniProtKB-SubCell"/>
</dbReference>
<dbReference type="GO" id="GO:0005524">
    <property type="term" value="F:ATP binding"/>
    <property type="evidence" value="ECO:0007669"/>
    <property type="project" value="UniProtKB-UniRule"/>
</dbReference>
<dbReference type="GO" id="GO:0016301">
    <property type="term" value="F:kinase activity"/>
    <property type="evidence" value="ECO:0007669"/>
    <property type="project" value="UniProtKB-KW"/>
</dbReference>
<dbReference type="GO" id="GO:0016773">
    <property type="term" value="F:phosphotransferase activity, alcohol group as acceptor"/>
    <property type="evidence" value="ECO:0007669"/>
    <property type="project" value="UniProtKB-UniRule"/>
</dbReference>
<dbReference type="GO" id="GO:0009244">
    <property type="term" value="P:lipopolysaccharide core region biosynthetic process"/>
    <property type="evidence" value="ECO:0007669"/>
    <property type="project" value="UniProtKB-UniRule"/>
</dbReference>
<dbReference type="Gene3D" id="1.10.510.10">
    <property type="entry name" value="Transferase(Phosphotransferase) domain 1"/>
    <property type="match status" value="1"/>
</dbReference>
<dbReference type="HAMAP" id="MF_00521">
    <property type="entry name" value="KDO_kinase"/>
    <property type="match status" value="1"/>
</dbReference>
<dbReference type="InterPro" id="IPR022826">
    <property type="entry name" value="KDO_kinase"/>
</dbReference>
<dbReference type="InterPro" id="IPR011009">
    <property type="entry name" value="Kinase-like_dom_sf"/>
</dbReference>
<dbReference type="NCBIfam" id="NF002475">
    <property type="entry name" value="PRK01723.1"/>
    <property type="match status" value="1"/>
</dbReference>
<dbReference type="Pfam" id="PF06293">
    <property type="entry name" value="Kdo"/>
    <property type="match status" value="1"/>
</dbReference>
<dbReference type="SUPFAM" id="SSF56112">
    <property type="entry name" value="Protein kinase-like (PK-like)"/>
    <property type="match status" value="1"/>
</dbReference>
<reference key="1">
    <citation type="submission" date="2002-12" db="EMBL/GenBank/DDBJ databases">
        <title>Complete genome sequence of Vibrio vulnificus CMCP6.</title>
        <authorList>
            <person name="Rhee J.H."/>
            <person name="Kim S.Y."/>
            <person name="Chung S.S."/>
            <person name="Kim J.J."/>
            <person name="Moon Y.H."/>
            <person name="Jeong H."/>
            <person name="Choy H.E."/>
        </authorList>
    </citation>
    <scope>NUCLEOTIDE SEQUENCE [LARGE SCALE GENOMIC DNA]</scope>
    <source>
        <strain>CMCP6</strain>
    </source>
</reference>